<sequence>MAVYTDITEDDLKWFLTEYDVGTLLSYKGIAEGVENSNFLLHTSRDPLILTLYEKRVEKNDLPFFLGLMQHLASRGLSCPLPLPRRDGELLGHLSGRPAALISFLEGMWLRKPEAKHCREVGKALAAMHVAGEGFDIKRPNALSLAGWQGLWEKSEARADEVEPGLQDEIRGELDFLGSHWPKDLPDGVIHADLFPDNVFFLGDELSGLIDFYFACNDQLAYDVSICLNAWCFEKDGAYNITKGMALLEGYQSVRPLSDAEIAALPTLSRGSALRFFLTRLYDWLTTPAGAMVTKKDPLEYLRKLRFHRQIASSAEYGLKA</sequence>
<evidence type="ECO:0000255" key="1">
    <source>
        <dbReference type="HAMAP-Rule" id="MF_00301"/>
    </source>
</evidence>
<accession>B9JAQ3</accession>
<feature type="chain" id="PRO_1000196941" description="Homoserine kinase">
    <location>
        <begin position="1"/>
        <end position="321"/>
    </location>
</feature>
<keyword id="KW-0028">Amino-acid biosynthesis</keyword>
<keyword id="KW-0067">ATP-binding</keyword>
<keyword id="KW-0418">Kinase</keyword>
<keyword id="KW-0547">Nucleotide-binding</keyword>
<keyword id="KW-0791">Threonine biosynthesis</keyword>
<keyword id="KW-0808">Transferase</keyword>
<dbReference type="EC" id="2.7.1.39" evidence="1"/>
<dbReference type="EMBL" id="CP000628">
    <property type="protein sequence ID" value="ACM25736.1"/>
    <property type="molecule type" value="Genomic_DNA"/>
</dbReference>
<dbReference type="RefSeq" id="WP_007693899.1">
    <property type="nucleotide sequence ID" value="NC_011985.1"/>
</dbReference>
<dbReference type="SMR" id="B9JAQ3"/>
<dbReference type="STRING" id="311403.Arad_1245"/>
<dbReference type="KEGG" id="ara:Arad_1245"/>
<dbReference type="eggNOG" id="COG2334">
    <property type="taxonomic scope" value="Bacteria"/>
</dbReference>
<dbReference type="HOGENOM" id="CLU_053300_0_0_5"/>
<dbReference type="UniPathway" id="UPA00050">
    <property type="reaction ID" value="UER00064"/>
</dbReference>
<dbReference type="Proteomes" id="UP000001600">
    <property type="component" value="Chromosome 1"/>
</dbReference>
<dbReference type="GO" id="GO:0005524">
    <property type="term" value="F:ATP binding"/>
    <property type="evidence" value="ECO:0007669"/>
    <property type="project" value="UniProtKB-KW"/>
</dbReference>
<dbReference type="GO" id="GO:0004413">
    <property type="term" value="F:homoserine kinase activity"/>
    <property type="evidence" value="ECO:0007669"/>
    <property type="project" value="UniProtKB-UniRule"/>
</dbReference>
<dbReference type="GO" id="GO:0009088">
    <property type="term" value="P:threonine biosynthetic process"/>
    <property type="evidence" value="ECO:0007669"/>
    <property type="project" value="UniProtKB-UniRule"/>
</dbReference>
<dbReference type="CDD" id="cd05153">
    <property type="entry name" value="HomoserineK_II"/>
    <property type="match status" value="1"/>
</dbReference>
<dbReference type="Gene3D" id="3.90.1200.10">
    <property type="match status" value="1"/>
</dbReference>
<dbReference type="Gene3D" id="3.30.200.20">
    <property type="entry name" value="Phosphorylase Kinase, domain 1"/>
    <property type="match status" value="1"/>
</dbReference>
<dbReference type="HAMAP" id="MF_00301">
    <property type="entry name" value="Homoser_kinase_2"/>
    <property type="match status" value="1"/>
</dbReference>
<dbReference type="InterPro" id="IPR002575">
    <property type="entry name" value="Aminoglycoside_PTrfase"/>
</dbReference>
<dbReference type="InterPro" id="IPR005280">
    <property type="entry name" value="Homoserine_kinase_II"/>
</dbReference>
<dbReference type="InterPro" id="IPR011009">
    <property type="entry name" value="Kinase-like_dom_sf"/>
</dbReference>
<dbReference type="InterPro" id="IPR050249">
    <property type="entry name" value="Pseudomonas-type_ThrB"/>
</dbReference>
<dbReference type="NCBIfam" id="NF003558">
    <property type="entry name" value="PRK05231.1"/>
    <property type="match status" value="1"/>
</dbReference>
<dbReference type="NCBIfam" id="TIGR00938">
    <property type="entry name" value="thrB_alt"/>
    <property type="match status" value="1"/>
</dbReference>
<dbReference type="PANTHER" id="PTHR21064:SF6">
    <property type="entry name" value="AMINOGLYCOSIDE PHOSPHOTRANSFERASE DOMAIN-CONTAINING PROTEIN"/>
    <property type="match status" value="1"/>
</dbReference>
<dbReference type="PANTHER" id="PTHR21064">
    <property type="entry name" value="AMINOGLYCOSIDE PHOSPHOTRANSFERASE DOMAIN-CONTAINING PROTEIN-RELATED"/>
    <property type="match status" value="1"/>
</dbReference>
<dbReference type="Pfam" id="PF01636">
    <property type="entry name" value="APH"/>
    <property type="match status" value="1"/>
</dbReference>
<dbReference type="SUPFAM" id="SSF56112">
    <property type="entry name" value="Protein kinase-like (PK-like)"/>
    <property type="match status" value="1"/>
</dbReference>
<protein>
    <recommendedName>
        <fullName evidence="1">Homoserine kinase</fullName>
        <shortName evidence="1">HK</shortName>
        <shortName evidence="1">HSK</shortName>
        <ecNumber evidence="1">2.7.1.39</ecNumber>
    </recommendedName>
</protein>
<gene>
    <name evidence="1" type="primary">thrB</name>
    <name type="ordered locus">Arad_1245</name>
</gene>
<proteinExistence type="inferred from homology"/>
<name>KHSE_RHIR8</name>
<organism>
    <name type="scientific">Rhizobium rhizogenes (strain K84 / ATCC BAA-868)</name>
    <name type="common">Agrobacterium radiobacter</name>
    <dbReference type="NCBI Taxonomy" id="311403"/>
    <lineage>
        <taxon>Bacteria</taxon>
        <taxon>Pseudomonadati</taxon>
        <taxon>Pseudomonadota</taxon>
        <taxon>Alphaproteobacteria</taxon>
        <taxon>Hyphomicrobiales</taxon>
        <taxon>Rhizobiaceae</taxon>
        <taxon>Rhizobium/Agrobacterium group</taxon>
        <taxon>Rhizobium</taxon>
    </lineage>
</organism>
<reference key="1">
    <citation type="journal article" date="2009" name="J. Bacteriol.">
        <title>Genome sequences of three Agrobacterium biovars help elucidate the evolution of multichromosome genomes in bacteria.</title>
        <authorList>
            <person name="Slater S.C."/>
            <person name="Goldman B.S."/>
            <person name="Goodner B."/>
            <person name="Setubal J.C."/>
            <person name="Farrand S.K."/>
            <person name="Nester E.W."/>
            <person name="Burr T.J."/>
            <person name="Banta L."/>
            <person name="Dickerman A.W."/>
            <person name="Paulsen I."/>
            <person name="Otten L."/>
            <person name="Suen G."/>
            <person name="Welch R."/>
            <person name="Almeida N.F."/>
            <person name="Arnold F."/>
            <person name="Burton O.T."/>
            <person name="Du Z."/>
            <person name="Ewing A."/>
            <person name="Godsy E."/>
            <person name="Heisel S."/>
            <person name="Houmiel K.L."/>
            <person name="Jhaveri J."/>
            <person name="Lu J."/>
            <person name="Miller N.M."/>
            <person name="Norton S."/>
            <person name="Chen Q."/>
            <person name="Phoolcharoen W."/>
            <person name="Ohlin V."/>
            <person name="Ondrusek D."/>
            <person name="Pride N."/>
            <person name="Stricklin S.L."/>
            <person name="Sun J."/>
            <person name="Wheeler C."/>
            <person name="Wilson L."/>
            <person name="Zhu H."/>
            <person name="Wood D.W."/>
        </authorList>
    </citation>
    <scope>NUCLEOTIDE SEQUENCE [LARGE SCALE GENOMIC DNA]</scope>
    <source>
        <strain>K84 / ATCC BAA-868</strain>
    </source>
</reference>
<comment type="catalytic activity">
    <reaction evidence="1">
        <text>L-homoserine + ATP = O-phospho-L-homoserine + ADP + H(+)</text>
        <dbReference type="Rhea" id="RHEA:13985"/>
        <dbReference type="ChEBI" id="CHEBI:15378"/>
        <dbReference type="ChEBI" id="CHEBI:30616"/>
        <dbReference type="ChEBI" id="CHEBI:57476"/>
        <dbReference type="ChEBI" id="CHEBI:57590"/>
        <dbReference type="ChEBI" id="CHEBI:456216"/>
        <dbReference type="EC" id="2.7.1.39"/>
    </reaction>
</comment>
<comment type="pathway">
    <text evidence="1">Amino-acid biosynthesis; L-threonine biosynthesis; L-threonine from L-aspartate: step 4/5.</text>
</comment>
<comment type="similarity">
    <text evidence="1">Belongs to the pseudomonas-type ThrB family.</text>
</comment>